<comment type="subcellular location">
    <subcellularLocation>
        <location evidence="1">Membrane</location>
        <topology evidence="1">Single-pass membrane protein</topology>
    </subcellularLocation>
</comment>
<comment type="caution">
    <text evidence="3">Product of a dubious gene prediction.</text>
</comment>
<sequence>MESLQTPQHRENQDKREKEYGVKHMPMGNNAGNLEPEKRKAVRVALSSATAAQNIPSSVHCGCSKQWRLRLPSESLQSRGQVMKRPNNILKLRNLDLLIYPWPELRRRQVASDLMSLLLLPAFSGLTWAPFLFLFTYLPPFLNLLTVGFVSYFLV</sequence>
<name>CJ111_HUMAN</name>
<protein>
    <recommendedName>
        <fullName evidence="3">Putative uncharacterized protein RPP38-DT</fullName>
    </recommendedName>
    <alternativeName>
        <fullName evidence="4">RPP38 divergent transcript protein</fullName>
    </alternativeName>
</protein>
<evidence type="ECO:0000255" key="1"/>
<evidence type="ECO:0000256" key="2">
    <source>
        <dbReference type="SAM" id="MobiDB-lite"/>
    </source>
</evidence>
<evidence type="ECO:0000305" key="3"/>
<evidence type="ECO:0000312" key="4">
    <source>
        <dbReference type="HGNC" id="HGNC:28582"/>
    </source>
</evidence>
<gene>
    <name evidence="4" type="primary">RPP38-DT</name>
    <name evidence="4" type="synonym">C10orf111</name>
</gene>
<proteinExistence type="uncertain"/>
<feature type="chain" id="PRO_0000089822" description="Putative uncharacterized protein RPP38-DT">
    <location>
        <begin position="1"/>
        <end position="155"/>
    </location>
</feature>
<feature type="transmembrane region" description="Helical" evidence="1">
    <location>
        <begin position="115"/>
        <end position="135"/>
    </location>
</feature>
<feature type="region of interest" description="Disordered" evidence="2">
    <location>
        <begin position="1"/>
        <end position="34"/>
    </location>
</feature>
<feature type="compositionally biased region" description="Basic and acidic residues" evidence="2">
    <location>
        <begin position="8"/>
        <end position="22"/>
    </location>
</feature>
<feature type="sequence variant" id="VAR_050857" description="In dbSNP:rs7896053.">
    <original>R</original>
    <variation>K</variation>
    <location>
        <position position="70"/>
    </location>
</feature>
<reference key="1">
    <citation type="journal article" date="2004" name="Nat. Genet.">
        <title>Complete sequencing and characterization of 21,243 full-length human cDNAs.</title>
        <authorList>
            <person name="Ota T."/>
            <person name="Suzuki Y."/>
            <person name="Nishikawa T."/>
            <person name="Otsuki T."/>
            <person name="Sugiyama T."/>
            <person name="Irie R."/>
            <person name="Wakamatsu A."/>
            <person name="Hayashi K."/>
            <person name="Sato H."/>
            <person name="Nagai K."/>
            <person name="Kimura K."/>
            <person name="Makita H."/>
            <person name="Sekine M."/>
            <person name="Obayashi M."/>
            <person name="Nishi T."/>
            <person name="Shibahara T."/>
            <person name="Tanaka T."/>
            <person name="Ishii S."/>
            <person name="Yamamoto J."/>
            <person name="Saito K."/>
            <person name="Kawai Y."/>
            <person name="Isono Y."/>
            <person name="Nakamura Y."/>
            <person name="Nagahari K."/>
            <person name="Murakami K."/>
            <person name="Yasuda T."/>
            <person name="Iwayanagi T."/>
            <person name="Wagatsuma M."/>
            <person name="Shiratori A."/>
            <person name="Sudo H."/>
            <person name="Hosoiri T."/>
            <person name="Kaku Y."/>
            <person name="Kodaira H."/>
            <person name="Kondo H."/>
            <person name="Sugawara M."/>
            <person name="Takahashi M."/>
            <person name="Kanda K."/>
            <person name="Yokoi T."/>
            <person name="Furuya T."/>
            <person name="Kikkawa E."/>
            <person name="Omura Y."/>
            <person name="Abe K."/>
            <person name="Kamihara K."/>
            <person name="Katsuta N."/>
            <person name="Sato K."/>
            <person name="Tanikawa M."/>
            <person name="Yamazaki M."/>
            <person name="Ninomiya K."/>
            <person name="Ishibashi T."/>
            <person name="Yamashita H."/>
            <person name="Murakawa K."/>
            <person name="Fujimori K."/>
            <person name="Tanai H."/>
            <person name="Kimata M."/>
            <person name="Watanabe M."/>
            <person name="Hiraoka S."/>
            <person name="Chiba Y."/>
            <person name="Ishida S."/>
            <person name="Ono Y."/>
            <person name="Takiguchi S."/>
            <person name="Watanabe S."/>
            <person name="Yosida M."/>
            <person name="Hotuta T."/>
            <person name="Kusano J."/>
            <person name="Kanehori K."/>
            <person name="Takahashi-Fujii A."/>
            <person name="Hara H."/>
            <person name="Tanase T.-O."/>
            <person name="Nomura Y."/>
            <person name="Togiya S."/>
            <person name="Komai F."/>
            <person name="Hara R."/>
            <person name="Takeuchi K."/>
            <person name="Arita M."/>
            <person name="Imose N."/>
            <person name="Musashino K."/>
            <person name="Yuuki H."/>
            <person name="Oshima A."/>
            <person name="Sasaki N."/>
            <person name="Aotsuka S."/>
            <person name="Yoshikawa Y."/>
            <person name="Matsunawa H."/>
            <person name="Ichihara T."/>
            <person name="Shiohata N."/>
            <person name="Sano S."/>
            <person name="Moriya S."/>
            <person name="Momiyama H."/>
            <person name="Satoh N."/>
            <person name="Takami S."/>
            <person name="Terashima Y."/>
            <person name="Suzuki O."/>
            <person name="Nakagawa S."/>
            <person name="Senoh A."/>
            <person name="Mizoguchi H."/>
            <person name="Goto Y."/>
            <person name="Shimizu F."/>
            <person name="Wakebe H."/>
            <person name="Hishigaki H."/>
            <person name="Watanabe T."/>
            <person name="Sugiyama A."/>
            <person name="Takemoto M."/>
            <person name="Kawakami B."/>
            <person name="Yamazaki M."/>
            <person name="Watanabe K."/>
            <person name="Kumagai A."/>
            <person name="Itakura S."/>
            <person name="Fukuzumi Y."/>
            <person name="Fujimori Y."/>
            <person name="Komiyama M."/>
            <person name="Tashiro H."/>
            <person name="Tanigami A."/>
            <person name="Fujiwara T."/>
            <person name="Ono T."/>
            <person name="Yamada K."/>
            <person name="Fujii Y."/>
            <person name="Ozaki K."/>
            <person name="Hirao M."/>
            <person name="Ohmori Y."/>
            <person name="Kawabata A."/>
            <person name="Hikiji T."/>
            <person name="Kobatake N."/>
            <person name="Inagaki H."/>
            <person name="Ikema Y."/>
            <person name="Okamoto S."/>
            <person name="Okitani R."/>
            <person name="Kawakami T."/>
            <person name="Noguchi S."/>
            <person name="Itoh T."/>
            <person name="Shigeta K."/>
            <person name="Senba T."/>
            <person name="Matsumura K."/>
            <person name="Nakajima Y."/>
            <person name="Mizuno T."/>
            <person name="Morinaga M."/>
            <person name="Sasaki M."/>
            <person name="Togashi T."/>
            <person name="Oyama M."/>
            <person name="Hata H."/>
            <person name="Watanabe M."/>
            <person name="Komatsu T."/>
            <person name="Mizushima-Sugano J."/>
            <person name="Satoh T."/>
            <person name="Shirai Y."/>
            <person name="Takahashi Y."/>
            <person name="Nakagawa K."/>
            <person name="Okumura K."/>
            <person name="Nagase T."/>
            <person name="Nomura N."/>
            <person name="Kikuchi H."/>
            <person name="Masuho Y."/>
            <person name="Yamashita R."/>
            <person name="Nakai K."/>
            <person name="Yada T."/>
            <person name="Nakamura Y."/>
            <person name="Ohara O."/>
            <person name="Isogai T."/>
            <person name="Sugano S."/>
        </authorList>
    </citation>
    <scope>NUCLEOTIDE SEQUENCE [LARGE SCALE MRNA]</scope>
    <source>
        <tissue>Thalamus</tissue>
    </source>
</reference>
<reference key="2">
    <citation type="journal article" date="2004" name="Nature">
        <title>The DNA sequence and comparative analysis of human chromosome 10.</title>
        <authorList>
            <person name="Deloukas P."/>
            <person name="Earthrowl M.E."/>
            <person name="Grafham D.V."/>
            <person name="Rubenfield M."/>
            <person name="French L."/>
            <person name="Steward C.A."/>
            <person name="Sims S.K."/>
            <person name="Jones M.C."/>
            <person name="Searle S."/>
            <person name="Scott C."/>
            <person name="Howe K."/>
            <person name="Hunt S.E."/>
            <person name="Andrews T.D."/>
            <person name="Gilbert J.G.R."/>
            <person name="Swarbreck D."/>
            <person name="Ashurst J.L."/>
            <person name="Taylor A."/>
            <person name="Battles J."/>
            <person name="Bird C.P."/>
            <person name="Ainscough R."/>
            <person name="Almeida J.P."/>
            <person name="Ashwell R.I.S."/>
            <person name="Ambrose K.D."/>
            <person name="Babbage A.K."/>
            <person name="Bagguley C.L."/>
            <person name="Bailey J."/>
            <person name="Banerjee R."/>
            <person name="Bates K."/>
            <person name="Beasley H."/>
            <person name="Bray-Allen S."/>
            <person name="Brown A.J."/>
            <person name="Brown J.Y."/>
            <person name="Burford D.C."/>
            <person name="Burrill W."/>
            <person name="Burton J."/>
            <person name="Cahill P."/>
            <person name="Camire D."/>
            <person name="Carter N.P."/>
            <person name="Chapman J.C."/>
            <person name="Clark S.Y."/>
            <person name="Clarke G."/>
            <person name="Clee C.M."/>
            <person name="Clegg S."/>
            <person name="Corby N."/>
            <person name="Coulson A."/>
            <person name="Dhami P."/>
            <person name="Dutta I."/>
            <person name="Dunn M."/>
            <person name="Faulkner L."/>
            <person name="Frankish A."/>
            <person name="Frankland J.A."/>
            <person name="Garner P."/>
            <person name="Garnett J."/>
            <person name="Gribble S."/>
            <person name="Griffiths C."/>
            <person name="Grocock R."/>
            <person name="Gustafson E."/>
            <person name="Hammond S."/>
            <person name="Harley J.L."/>
            <person name="Hart E."/>
            <person name="Heath P.D."/>
            <person name="Ho T.P."/>
            <person name="Hopkins B."/>
            <person name="Horne J."/>
            <person name="Howden P.J."/>
            <person name="Huckle E."/>
            <person name="Hynds C."/>
            <person name="Johnson C."/>
            <person name="Johnson D."/>
            <person name="Kana A."/>
            <person name="Kay M."/>
            <person name="Kimberley A.M."/>
            <person name="Kershaw J.K."/>
            <person name="Kokkinaki M."/>
            <person name="Laird G.K."/>
            <person name="Lawlor S."/>
            <person name="Lee H.M."/>
            <person name="Leongamornlert D.A."/>
            <person name="Laird G."/>
            <person name="Lloyd C."/>
            <person name="Lloyd D.M."/>
            <person name="Loveland J."/>
            <person name="Lovell J."/>
            <person name="McLaren S."/>
            <person name="McLay K.E."/>
            <person name="McMurray A."/>
            <person name="Mashreghi-Mohammadi M."/>
            <person name="Matthews L."/>
            <person name="Milne S."/>
            <person name="Nickerson T."/>
            <person name="Nguyen M."/>
            <person name="Overton-Larty E."/>
            <person name="Palmer S.A."/>
            <person name="Pearce A.V."/>
            <person name="Peck A.I."/>
            <person name="Pelan S."/>
            <person name="Phillimore B."/>
            <person name="Porter K."/>
            <person name="Rice C.M."/>
            <person name="Rogosin A."/>
            <person name="Ross M.T."/>
            <person name="Sarafidou T."/>
            <person name="Sehra H.K."/>
            <person name="Shownkeen R."/>
            <person name="Skuce C.D."/>
            <person name="Smith M."/>
            <person name="Standring L."/>
            <person name="Sycamore N."/>
            <person name="Tester J."/>
            <person name="Thorpe A."/>
            <person name="Torcasso W."/>
            <person name="Tracey A."/>
            <person name="Tromans A."/>
            <person name="Tsolas J."/>
            <person name="Wall M."/>
            <person name="Walsh J."/>
            <person name="Wang H."/>
            <person name="Weinstock K."/>
            <person name="West A.P."/>
            <person name="Willey D.L."/>
            <person name="Whitehead S.L."/>
            <person name="Wilming L."/>
            <person name="Wray P.W."/>
            <person name="Young L."/>
            <person name="Chen Y."/>
            <person name="Lovering R.C."/>
            <person name="Moschonas N.K."/>
            <person name="Siebert R."/>
            <person name="Fechtel K."/>
            <person name="Bentley D."/>
            <person name="Durbin R.M."/>
            <person name="Hubbard T."/>
            <person name="Doucette-Stamm L."/>
            <person name="Beck S."/>
            <person name="Smith D.R."/>
            <person name="Rogers J."/>
        </authorList>
    </citation>
    <scope>NUCLEOTIDE SEQUENCE [LARGE SCALE GENOMIC DNA]</scope>
</reference>
<reference key="3">
    <citation type="journal article" date="2004" name="Genome Res.">
        <title>The status, quality, and expansion of the NIH full-length cDNA project: the Mammalian Gene Collection (MGC).</title>
        <authorList>
            <consortium name="The MGC Project Team"/>
        </authorList>
    </citation>
    <scope>NUCLEOTIDE SEQUENCE [LARGE SCALE MRNA]</scope>
    <source>
        <tissue>Brain</tissue>
    </source>
</reference>
<accession>Q8N326</accession>
<accession>B2RAC4</accession>
<keyword id="KW-0472">Membrane</keyword>
<keyword id="KW-1185">Reference proteome</keyword>
<keyword id="KW-0812">Transmembrane</keyword>
<keyword id="KW-1133">Transmembrane helix</keyword>
<dbReference type="EMBL" id="AK314131">
    <property type="protein sequence ID" value="BAG36821.1"/>
    <property type="molecule type" value="mRNA"/>
</dbReference>
<dbReference type="EMBL" id="AL590365">
    <property type="status" value="NOT_ANNOTATED_CDS"/>
    <property type="molecule type" value="Genomic_DNA"/>
</dbReference>
<dbReference type="EMBL" id="BC029034">
    <property type="protein sequence ID" value="AAH29034.1"/>
    <property type="molecule type" value="mRNA"/>
</dbReference>
<dbReference type="RefSeq" id="NP_694976.1">
    <property type="nucleotide sequence ID" value="NM_153244.1"/>
</dbReference>
<dbReference type="SMR" id="Q8N326"/>
<dbReference type="BioGRID" id="128679">
    <property type="interactions" value="1"/>
</dbReference>
<dbReference type="iPTMnet" id="Q8N326"/>
<dbReference type="PhosphoSitePlus" id="Q8N326"/>
<dbReference type="BioMuta" id="HGNC:28582"/>
<dbReference type="DMDM" id="68052358"/>
<dbReference type="jPOST" id="Q8N326"/>
<dbReference type="MassIVE" id="Q8N326"/>
<dbReference type="PaxDb" id="9606-ENSP00000367449"/>
<dbReference type="ProteomicsDB" id="71757"/>
<dbReference type="DNASU" id="221060"/>
<dbReference type="AGR" id="HGNC:28582"/>
<dbReference type="GeneCards" id="RPP38-DT"/>
<dbReference type="HGNC" id="HGNC:28582">
    <property type="gene designation" value="RPP38-DT"/>
</dbReference>
<dbReference type="MalaCards" id="RPP38-DT"/>
<dbReference type="neXtProt" id="NX_Q8N326"/>
<dbReference type="eggNOG" id="ENOG502RU3Y">
    <property type="taxonomic scope" value="Eukaryota"/>
</dbReference>
<dbReference type="InParanoid" id="Q8N326"/>
<dbReference type="PAN-GO" id="Q8N326">
    <property type="GO annotations" value="0 GO annotations based on evolutionary models"/>
</dbReference>
<dbReference type="PhylomeDB" id="Q8N326"/>
<dbReference type="PathwayCommons" id="Q8N326"/>
<dbReference type="BioGRID-ORCS" id="221060">
    <property type="hits" value="14 hits in 1121 CRISPR screens"/>
</dbReference>
<dbReference type="GenomeRNAi" id="221060"/>
<dbReference type="Pharos" id="Q8N326">
    <property type="development level" value="Tdark"/>
</dbReference>
<dbReference type="Proteomes" id="UP000005640">
    <property type="component" value="Unplaced"/>
</dbReference>
<dbReference type="RNAct" id="Q8N326">
    <property type="molecule type" value="protein"/>
</dbReference>
<dbReference type="GO" id="GO:0016020">
    <property type="term" value="C:membrane"/>
    <property type="evidence" value="ECO:0007669"/>
    <property type="project" value="UniProtKB-SubCell"/>
</dbReference>
<organism>
    <name type="scientific">Homo sapiens</name>
    <name type="common">Human</name>
    <dbReference type="NCBI Taxonomy" id="9606"/>
    <lineage>
        <taxon>Eukaryota</taxon>
        <taxon>Metazoa</taxon>
        <taxon>Chordata</taxon>
        <taxon>Craniata</taxon>
        <taxon>Vertebrata</taxon>
        <taxon>Euteleostomi</taxon>
        <taxon>Mammalia</taxon>
        <taxon>Eutheria</taxon>
        <taxon>Euarchontoglires</taxon>
        <taxon>Primates</taxon>
        <taxon>Haplorrhini</taxon>
        <taxon>Catarrhini</taxon>
        <taxon>Hominidae</taxon>
        <taxon>Homo</taxon>
    </lineage>
</organism>